<protein>
    <recommendedName>
        <fullName evidence="2">D-galactonate dehydratase</fullName>
        <shortName evidence="2">GalD</shortName>
        <ecNumber evidence="2">4.2.1.6</ecNumber>
    </recommendedName>
</protein>
<sequence>MKITHITTYRLPPRWMFLKIETDEGVVGWGEPVIEGRARTVEAAVHEFADYLIGKDPARINDLWQVMYRAGFYRGGPIMMSAIAGIDQALWDIKGKVLNAPVWQLMGGLVRDKIKAYSWVGGDRPADVIDGIEKLRGIGFDTFKLNGCEEMGVIDNSRAVDAAVNTVAQIREAFGSEIEFGLDFHGRVSAPMAKVLIKELEPYRPLFIEEPVLAEQAEYYPRLAAQTHIPIAAGERMFSRFEFKRVLDAGGLAILQPDLSHAGGITECYKIAGMAEAYDVALAPHCPLGPIALAACLHIDFVSRNAVFQEQSMGIHYNKGAELLDFVKNKEDFSMDGGFFKPLTKPGLGVDIDEARVIELSKSAPDWRNPLWRHADGSVAEW</sequence>
<gene>
    <name evidence="2" type="primary">dgoD</name>
    <name type="ordered locus">SeD_A4219</name>
</gene>
<evidence type="ECO:0000250" key="1"/>
<evidence type="ECO:0000255" key="2">
    <source>
        <dbReference type="HAMAP-Rule" id="MF_01289"/>
    </source>
</evidence>
<proteinExistence type="inferred from homology"/>
<reference key="1">
    <citation type="journal article" date="2011" name="J. Bacteriol.">
        <title>Comparative genomics of 28 Salmonella enterica isolates: evidence for CRISPR-mediated adaptive sublineage evolution.</title>
        <authorList>
            <person name="Fricke W.F."/>
            <person name="Mammel M.K."/>
            <person name="McDermott P.F."/>
            <person name="Tartera C."/>
            <person name="White D.G."/>
            <person name="Leclerc J.E."/>
            <person name="Ravel J."/>
            <person name="Cebula T.A."/>
        </authorList>
    </citation>
    <scope>NUCLEOTIDE SEQUENCE [LARGE SCALE GENOMIC DNA]</scope>
    <source>
        <strain>CT_02021853</strain>
    </source>
</reference>
<name>DGOD_SALDC</name>
<dbReference type="EC" id="4.2.1.6" evidence="2"/>
<dbReference type="EMBL" id="CP001144">
    <property type="protein sequence ID" value="ACH76636.1"/>
    <property type="molecule type" value="Genomic_DNA"/>
</dbReference>
<dbReference type="RefSeq" id="WP_000704735.1">
    <property type="nucleotide sequence ID" value="NC_011205.1"/>
</dbReference>
<dbReference type="SMR" id="B5FN00"/>
<dbReference type="KEGG" id="sed:SeD_A4219"/>
<dbReference type="HOGENOM" id="CLU_030273_3_2_6"/>
<dbReference type="UniPathway" id="UPA00081">
    <property type="reaction ID" value="UER00518"/>
</dbReference>
<dbReference type="Proteomes" id="UP000008322">
    <property type="component" value="Chromosome"/>
</dbReference>
<dbReference type="GO" id="GO:0008869">
    <property type="term" value="F:galactonate dehydratase activity"/>
    <property type="evidence" value="ECO:0007669"/>
    <property type="project" value="UniProtKB-UniRule"/>
</dbReference>
<dbReference type="GO" id="GO:0000287">
    <property type="term" value="F:magnesium ion binding"/>
    <property type="evidence" value="ECO:0007669"/>
    <property type="project" value="UniProtKB-UniRule"/>
</dbReference>
<dbReference type="GO" id="GO:0009063">
    <property type="term" value="P:amino acid catabolic process"/>
    <property type="evidence" value="ECO:0007669"/>
    <property type="project" value="InterPro"/>
</dbReference>
<dbReference type="GO" id="GO:0034194">
    <property type="term" value="P:D-galactonate catabolic process"/>
    <property type="evidence" value="ECO:0007669"/>
    <property type="project" value="UniProtKB-UniRule"/>
</dbReference>
<dbReference type="CDD" id="cd03325">
    <property type="entry name" value="D-galactonate_dehydratase"/>
    <property type="match status" value="1"/>
</dbReference>
<dbReference type="FunFam" id="3.20.20.120:FF:000008">
    <property type="entry name" value="D-galactonate dehydratase"/>
    <property type="match status" value="1"/>
</dbReference>
<dbReference type="FunFam" id="3.30.390.10:FF:000003">
    <property type="entry name" value="D-galactonate dehydratase"/>
    <property type="match status" value="1"/>
</dbReference>
<dbReference type="Gene3D" id="3.20.20.120">
    <property type="entry name" value="Enolase-like C-terminal domain"/>
    <property type="match status" value="1"/>
</dbReference>
<dbReference type="Gene3D" id="3.30.390.10">
    <property type="entry name" value="Enolase-like, N-terminal domain"/>
    <property type="match status" value="1"/>
</dbReference>
<dbReference type="HAMAP" id="MF_01289">
    <property type="entry name" value="Galacton_dehydrat"/>
    <property type="match status" value="1"/>
</dbReference>
<dbReference type="InterPro" id="IPR034593">
    <property type="entry name" value="DgoD-like"/>
</dbReference>
<dbReference type="InterPro" id="IPR036849">
    <property type="entry name" value="Enolase-like_C_sf"/>
</dbReference>
<dbReference type="InterPro" id="IPR029017">
    <property type="entry name" value="Enolase-like_N"/>
</dbReference>
<dbReference type="InterPro" id="IPR029065">
    <property type="entry name" value="Enolase_C-like"/>
</dbReference>
<dbReference type="InterPro" id="IPR023592">
    <property type="entry name" value="Galactonate_deHydtase"/>
</dbReference>
<dbReference type="InterPro" id="IPR018110">
    <property type="entry name" value="Mandel_Rmase/mucon_lact_enz_CS"/>
</dbReference>
<dbReference type="InterPro" id="IPR013342">
    <property type="entry name" value="Mandelate_racemase_C"/>
</dbReference>
<dbReference type="InterPro" id="IPR013341">
    <property type="entry name" value="Mandelate_racemase_N_dom"/>
</dbReference>
<dbReference type="NCBIfam" id="NF010624">
    <property type="entry name" value="PRK14017.1"/>
    <property type="match status" value="1"/>
</dbReference>
<dbReference type="PANTHER" id="PTHR48080:SF2">
    <property type="entry name" value="D-GALACTONATE DEHYDRATASE"/>
    <property type="match status" value="1"/>
</dbReference>
<dbReference type="PANTHER" id="PTHR48080">
    <property type="entry name" value="D-GALACTONATE DEHYDRATASE-RELATED"/>
    <property type="match status" value="1"/>
</dbReference>
<dbReference type="Pfam" id="PF13378">
    <property type="entry name" value="MR_MLE_C"/>
    <property type="match status" value="1"/>
</dbReference>
<dbReference type="Pfam" id="PF02746">
    <property type="entry name" value="MR_MLE_N"/>
    <property type="match status" value="1"/>
</dbReference>
<dbReference type="SFLD" id="SFLDF00003">
    <property type="entry name" value="D-galactonate_dehydratase"/>
    <property type="match status" value="1"/>
</dbReference>
<dbReference type="SFLD" id="SFLDS00001">
    <property type="entry name" value="Enolase"/>
    <property type="match status" value="1"/>
</dbReference>
<dbReference type="SMART" id="SM00922">
    <property type="entry name" value="MR_MLE"/>
    <property type="match status" value="1"/>
</dbReference>
<dbReference type="SUPFAM" id="SSF51604">
    <property type="entry name" value="Enolase C-terminal domain-like"/>
    <property type="match status" value="1"/>
</dbReference>
<dbReference type="SUPFAM" id="SSF54826">
    <property type="entry name" value="Enolase N-terminal domain-like"/>
    <property type="match status" value="1"/>
</dbReference>
<dbReference type="PROSITE" id="PS00908">
    <property type="entry name" value="MR_MLE_1"/>
    <property type="match status" value="1"/>
</dbReference>
<dbReference type="PROSITE" id="PS00909">
    <property type="entry name" value="MR_MLE_2"/>
    <property type="match status" value="1"/>
</dbReference>
<keyword id="KW-0456">Lyase</keyword>
<keyword id="KW-0460">Magnesium</keyword>
<keyword id="KW-0479">Metal-binding</keyword>
<feature type="chain" id="PRO_1000140386" description="D-galactonate dehydratase">
    <location>
        <begin position="1"/>
        <end position="382"/>
    </location>
</feature>
<feature type="active site" description="Proton donor" evidence="1">
    <location>
        <position position="185"/>
    </location>
</feature>
<feature type="active site" description="Proton acceptor" evidence="1">
    <location>
        <position position="285"/>
    </location>
</feature>
<feature type="binding site" evidence="2">
    <location>
        <position position="183"/>
    </location>
    <ligand>
        <name>Mg(2+)</name>
        <dbReference type="ChEBI" id="CHEBI:18420"/>
    </ligand>
</feature>
<feature type="binding site" evidence="2">
    <location>
        <position position="209"/>
    </location>
    <ligand>
        <name>Mg(2+)</name>
        <dbReference type="ChEBI" id="CHEBI:18420"/>
    </ligand>
</feature>
<feature type="binding site" evidence="2">
    <location>
        <position position="235"/>
    </location>
    <ligand>
        <name>Mg(2+)</name>
        <dbReference type="ChEBI" id="CHEBI:18420"/>
    </ligand>
</feature>
<feature type="site" description="Increases basicity of active site His" evidence="2">
    <location>
        <position position="258"/>
    </location>
</feature>
<feature type="site" description="Transition state stabilizer" evidence="2">
    <location>
        <position position="310"/>
    </location>
</feature>
<organism>
    <name type="scientific">Salmonella dublin (strain CT_02021853)</name>
    <dbReference type="NCBI Taxonomy" id="439851"/>
    <lineage>
        <taxon>Bacteria</taxon>
        <taxon>Pseudomonadati</taxon>
        <taxon>Pseudomonadota</taxon>
        <taxon>Gammaproteobacteria</taxon>
        <taxon>Enterobacterales</taxon>
        <taxon>Enterobacteriaceae</taxon>
        <taxon>Salmonella</taxon>
    </lineage>
</organism>
<comment type="function">
    <text evidence="2">Catalyzes the dehydration of D-galactonate to 2-keto-3-deoxy-D-galactonate.</text>
</comment>
<comment type="catalytic activity">
    <reaction evidence="2">
        <text>D-galactonate = 2-dehydro-3-deoxy-D-galactonate + H2O</text>
        <dbReference type="Rhea" id="RHEA:18649"/>
        <dbReference type="ChEBI" id="CHEBI:12931"/>
        <dbReference type="ChEBI" id="CHEBI:15377"/>
        <dbReference type="ChEBI" id="CHEBI:57989"/>
        <dbReference type="EC" id="4.2.1.6"/>
    </reaction>
</comment>
<comment type="cofactor">
    <cofactor evidence="2">
        <name>Mg(2+)</name>
        <dbReference type="ChEBI" id="CHEBI:18420"/>
    </cofactor>
    <text evidence="2">Binds 1 Mg(2+) ion per subunit.</text>
</comment>
<comment type="pathway">
    <text evidence="2">Carbohydrate acid metabolism; D-galactonate degradation; D-glyceraldehyde 3-phosphate and pyruvate from D-galactonate: step 1/3.</text>
</comment>
<comment type="miscellaneous">
    <text evidence="2">Reaction proceeds via an anti dehydration.</text>
</comment>
<comment type="similarity">
    <text evidence="2">Belongs to the mandelate racemase/muconate lactonizing enzyme family. GalD subfamily.</text>
</comment>
<accession>B5FN00</accession>